<dbReference type="EMBL" id="X51679">
    <property type="protein sequence ID" value="CAA35982.1"/>
    <property type="molecule type" value="mRNA"/>
</dbReference>
<dbReference type="PIR" id="S07533">
    <property type="entry name" value="S07533"/>
</dbReference>
<dbReference type="SMR" id="P22312"/>
<dbReference type="GlyCosmos" id="P22312">
    <property type="glycosylation" value="1 site, No reported glycans"/>
</dbReference>
<dbReference type="OrthoDB" id="10255522at2759"/>
<dbReference type="GO" id="GO:0005634">
    <property type="term" value="C:nucleus"/>
    <property type="evidence" value="ECO:0007669"/>
    <property type="project" value="TreeGrafter"/>
</dbReference>
<dbReference type="GO" id="GO:0030915">
    <property type="term" value="C:Smc5-Smc6 complex"/>
    <property type="evidence" value="ECO:0007669"/>
    <property type="project" value="TreeGrafter"/>
</dbReference>
<dbReference type="GO" id="GO:0003697">
    <property type="term" value="F:single-stranded DNA binding"/>
    <property type="evidence" value="ECO:0007669"/>
    <property type="project" value="TreeGrafter"/>
</dbReference>
<dbReference type="GO" id="GO:0000724">
    <property type="term" value="P:double-strand break repair via homologous recombination"/>
    <property type="evidence" value="ECO:0007669"/>
    <property type="project" value="TreeGrafter"/>
</dbReference>
<dbReference type="Gene3D" id="1.10.287.1490">
    <property type="match status" value="1"/>
</dbReference>
<dbReference type="PANTHER" id="PTHR45916">
    <property type="entry name" value="STRUCTURAL MAINTENANCE OF CHROMOSOMES PROTEIN 5"/>
    <property type="match status" value="1"/>
</dbReference>
<dbReference type="PANTHER" id="PTHR45916:SF1">
    <property type="entry name" value="STRUCTURAL MAINTENANCE OF CHROMOSOMES PROTEIN 5"/>
    <property type="match status" value="1"/>
</dbReference>
<dbReference type="SUPFAM" id="SSF57997">
    <property type="entry name" value="Tropomyosin"/>
    <property type="match status" value="1"/>
</dbReference>
<protein>
    <recommendedName>
        <fullName>Puff II/9-2 protein</fullName>
    </recommendedName>
</protein>
<keyword id="KW-0175">Coiled coil</keyword>
<keyword id="KW-0325">Glycoprotein</keyword>
<keyword id="KW-0732">Signal</keyword>
<feature type="signal peptide" evidence="1">
    <location>
        <begin position="1"/>
        <end position="19"/>
    </location>
</feature>
<feature type="chain" id="PRO_0000022193" description="Puff II/9-2 protein">
    <location>
        <begin position="20"/>
        <end position="286"/>
    </location>
</feature>
<feature type="region of interest" description="Helical" evidence="1">
    <location>
        <begin position="61"/>
        <end position="235"/>
    </location>
</feature>
<feature type="glycosylation site" description="N-linked (GlcNAc...) asparagine" evidence="1">
    <location>
        <position position="156"/>
    </location>
</feature>
<organism>
    <name type="scientific">Bradysia coprophila</name>
    <name type="common">Dark-winged fungus gnat</name>
    <name type="synonym">Sciara coprophila</name>
    <dbReference type="NCBI Taxonomy" id="38358"/>
    <lineage>
        <taxon>Eukaryota</taxon>
        <taxon>Metazoa</taxon>
        <taxon>Ecdysozoa</taxon>
        <taxon>Arthropoda</taxon>
        <taxon>Hexapoda</taxon>
        <taxon>Insecta</taxon>
        <taxon>Pterygota</taxon>
        <taxon>Neoptera</taxon>
        <taxon>Endopterygota</taxon>
        <taxon>Diptera</taxon>
        <taxon>Nematocera</taxon>
        <taxon>Sciaroidea</taxon>
        <taxon>Sciaridae</taxon>
        <taxon>Bradysia</taxon>
    </lineage>
</organism>
<gene>
    <name type="primary">II/9-2</name>
</gene>
<evidence type="ECO:0000255" key="1"/>
<reference key="1">
    <citation type="journal article" date="1989" name="J. Mol. Biol.">
        <title>Molecular characterization of DNA puff II/9A genes in Sciara coprophila.</title>
        <authorList>
            <person name="Dibartolomeis S.M."/>
            <person name="Gerbi S.A."/>
        </authorList>
    </citation>
    <scope>NUCLEOTIDE SEQUENCE [MRNA]</scope>
    <source>
        <strain>6980</strain>
    </source>
</reference>
<comment type="miscellaneous">
    <text>The DNA puff II/9 proteins have a proposed intermolecular coiled coil structure with possibly intermolecular disulfide bridges formed by numerous cysteine residues in position D of the heptad repeat.</text>
</comment>
<name>PU92_BRACO</name>
<sequence>MKQFIVLTVVLLAIQELQGGSVVTVDDKCTCKDTLNTLTKGQLIDRLVLCNQRNDNLEKIIDGLKKENNILRKENDGLRAENCQLSEALKREKEARQKAEKALKECQKNTENLKETIEQLKKELAEAQKALEKCKKELADCKKENAKLLNKIEELNCTITQLQEKLERCRGRERDLQCQLDECKKKLNICNNELIACRKQQEELRCKIERLNTEIEKLRKQNAACEKDLNTLRCETSEFLAIATQRQSQLTSIIQRAEGESSAIKASYIGFRNSHDLTCAPCAGPA</sequence>
<proteinExistence type="evidence at transcript level"/>
<accession>P22312</accession>